<comment type="function">
    <text evidence="1">This protein is involved in the repair of mismatches in DNA. It is required for dam-dependent methyl-directed DNA mismatch repair. May act as a 'molecular matchmaker', a protein that promotes the formation of a stable complex between two or more DNA-binding proteins in an ATP-dependent manner without itself being part of a final effector complex.</text>
</comment>
<comment type="similarity">
    <text evidence="1">Belongs to the DNA mismatch repair MutL/HexB family.</text>
</comment>
<accession>B1IT36</accession>
<keyword id="KW-0227">DNA damage</keyword>
<keyword id="KW-0234">DNA repair</keyword>
<sequence>MPIQVLPPQLANQIAAGEVVERPASVVKELVENSLDAGATRIDIDIERGGAKIIRIRDNGCGIKKDELALALARHATSKIASLDDLEAIISLGFRGEALASISSVSRLTLTSRTAEQQEAWQAYAEGRDMDVTVKPAAHPVGTTLEVLDLFYNTPARRKFLRTEKTEFNHIDEIIRRIALARFDVTINLSHNGKIVRQYRAVPEGGQKERRLGAICGTAFLEQALAIEWQHGDLTLRGWVADPNHTTPALAEIQYCYVNGRMMRDRLINHAIRQACEDKLGADQQPAFVLYLEIDPHQVDVNVHPAKHEVRFHQSRLVHDFIYQGVLSVLQQQLETPLPLDDEPQPAPRAIPENRVAAGRNHFAEPAAREPVAPRYTPAPASGSRPAAPWPNAQPGYQKQQGEVYRQLLQTPAPMQKPKAPEPQEPALAANSQSFGRVLTIVHSDCALLERDGNISLLALSVAERWLRQAQLTPGEAPVCAQPLLIPLRLKVSGEEKSALEKAQSALAELGIDFQSDAQHVTIRAVPLPLRQQNLQILIPELIGYLAKQSVFEPGNIAQWIARNLMSEHAQWSMAQAITLLADVERLCPQLVKTPPGGLLQSVDLHPAIKALKDE</sequence>
<reference key="1">
    <citation type="submission" date="2008-02" db="EMBL/GenBank/DDBJ databases">
        <title>Complete sequence of Escherichia coli C str. ATCC 8739.</title>
        <authorList>
            <person name="Copeland A."/>
            <person name="Lucas S."/>
            <person name="Lapidus A."/>
            <person name="Glavina del Rio T."/>
            <person name="Dalin E."/>
            <person name="Tice H."/>
            <person name="Bruce D."/>
            <person name="Goodwin L."/>
            <person name="Pitluck S."/>
            <person name="Kiss H."/>
            <person name="Brettin T."/>
            <person name="Detter J.C."/>
            <person name="Han C."/>
            <person name="Kuske C.R."/>
            <person name="Schmutz J."/>
            <person name="Larimer F."/>
            <person name="Land M."/>
            <person name="Hauser L."/>
            <person name="Kyrpides N."/>
            <person name="Mikhailova N."/>
            <person name="Ingram L."/>
            <person name="Richardson P."/>
        </authorList>
    </citation>
    <scope>NUCLEOTIDE SEQUENCE [LARGE SCALE GENOMIC DNA]</scope>
    <source>
        <strain>ATCC 8739 / DSM 1576 / NBRC 3972 / NCIMB 8545 / WDCM 00012 / Crooks</strain>
    </source>
</reference>
<protein>
    <recommendedName>
        <fullName evidence="1">DNA mismatch repair protein MutL</fullName>
    </recommendedName>
</protein>
<gene>
    <name evidence="1" type="primary">mutL</name>
    <name type="ordered locus">EcolC_3843</name>
</gene>
<organism>
    <name type="scientific">Escherichia coli (strain ATCC 8739 / DSM 1576 / NBRC 3972 / NCIMB 8545 / WDCM 00012 / Crooks)</name>
    <dbReference type="NCBI Taxonomy" id="481805"/>
    <lineage>
        <taxon>Bacteria</taxon>
        <taxon>Pseudomonadati</taxon>
        <taxon>Pseudomonadota</taxon>
        <taxon>Gammaproteobacteria</taxon>
        <taxon>Enterobacterales</taxon>
        <taxon>Enterobacteriaceae</taxon>
        <taxon>Escherichia</taxon>
    </lineage>
</organism>
<evidence type="ECO:0000255" key="1">
    <source>
        <dbReference type="HAMAP-Rule" id="MF_00149"/>
    </source>
</evidence>
<evidence type="ECO:0000256" key="2">
    <source>
        <dbReference type="SAM" id="MobiDB-lite"/>
    </source>
</evidence>
<proteinExistence type="inferred from homology"/>
<name>MUTL_ECOLC</name>
<feature type="chain" id="PRO_1000076696" description="DNA mismatch repair protein MutL">
    <location>
        <begin position="1"/>
        <end position="615"/>
    </location>
</feature>
<feature type="region of interest" description="Disordered" evidence="2">
    <location>
        <begin position="363"/>
        <end position="397"/>
    </location>
</feature>
<feature type="compositionally biased region" description="Low complexity" evidence="2">
    <location>
        <begin position="364"/>
        <end position="391"/>
    </location>
</feature>
<dbReference type="EMBL" id="CP000946">
    <property type="protein sequence ID" value="ACA79447.1"/>
    <property type="molecule type" value="Genomic_DNA"/>
</dbReference>
<dbReference type="RefSeq" id="WP_001122457.1">
    <property type="nucleotide sequence ID" value="NZ_MTFT01000012.1"/>
</dbReference>
<dbReference type="SMR" id="B1IT36"/>
<dbReference type="KEGG" id="ecl:EcolC_3843"/>
<dbReference type="HOGENOM" id="CLU_004131_5_1_6"/>
<dbReference type="GO" id="GO:0032300">
    <property type="term" value="C:mismatch repair complex"/>
    <property type="evidence" value="ECO:0007669"/>
    <property type="project" value="InterPro"/>
</dbReference>
<dbReference type="GO" id="GO:0005524">
    <property type="term" value="F:ATP binding"/>
    <property type="evidence" value="ECO:0007669"/>
    <property type="project" value="InterPro"/>
</dbReference>
<dbReference type="GO" id="GO:0016887">
    <property type="term" value="F:ATP hydrolysis activity"/>
    <property type="evidence" value="ECO:0007669"/>
    <property type="project" value="InterPro"/>
</dbReference>
<dbReference type="GO" id="GO:0140664">
    <property type="term" value="F:ATP-dependent DNA damage sensor activity"/>
    <property type="evidence" value="ECO:0007669"/>
    <property type="project" value="InterPro"/>
</dbReference>
<dbReference type="GO" id="GO:0030983">
    <property type="term" value="F:mismatched DNA binding"/>
    <property type="evidence" value="ECO:0007669"/>
    <property type="project" value="InterPro"/>
</dbReference>
<dbReference type="GO" id="GO:0006298">
    <property type="term" value="P:mismatch repair"/>
    <property type="evidence" value="ECO:0007669"/>
    <property type="project" value="UniProtKB-UniRule"/>
</dbReference>
<dbReference type="CDD" id="cd16926">
    <property type="entry name" value="HATPase_MutL-MLH-PMS-like"/>
    <property type="match status" value="1"/>
</dbReference>
<dbReference type="CDD" id="cd03482">
    <property type="entry name" value="MutL_Trans_MutL"/>
    <property type="match status" value="1"/>
</dbReference>
<dbReference type="FunFam" id="3.30.230.10:FF:000013">
    <property type="entry name" value="DNA mismatch repair endonuclease MutL"/>
    <property type="match status" value="1"/>
</dbReference>
<dbReference type="FunFam" id="3.30.565.10:FF:000003">
    <property type="entry name" value="DNA mismatch repair endonuclease MutL"/>
    <property type="match status" value="1"/>
</dbReference>
<dbReference type="FunFam" id="3.30.1370.100:FF:000002">
    <property type="entry name" value="DNA mismatch repair protein MutL"/>
    <property type="match status" value="1"/>
</dbReference>
<dbReference type="Gene3D" id="3.30.230.10">
    <property type="match status" value="1"/>
</dbReference>
<dbReference type="Gene3D" id="3.30.565.10">
    <property type="entry name" value="Histidine kinase-like ATPase, C-terminal domain"/>
    <property type="match status" value="1"/>
</dbReference>
<dbReference type="Gene3D" id="3.30.1540.20">
    <property type="entry name" value="MutL, C-terminal domain, dimerisation subdomain"/>
    <property type="match status" value="1"/>
</dbReference>
<dbReference type="Gene3D" id="3.30.1370.100">
    <property type="entry name" value="MutL, C-terminal domain, regulatory subdomain"/>
    <property type="match status" value="1"/>
</dbReference>
<dbReference type="HAMAP" id="MF_00149">
    <property type="entry name" value="DNA_mis_repair"/>
    <property type="match status" value="1"/>
</dbReference>
<dbReference type="InterPro" id="IPR014762">
    <property type="entry name" value="DNA_mismatch_repair_CS"/>
</dbReference>
<dbReference type="InterPro" id="IPR020667">
    <property type="entry name" value="DNA_mismatch_repair_MutL"/>
</dbReference>
<dbReference type="InterPro" id="IPR013507">
    <property type="entry name" value="DNA_mismatch_S5_2-like"/>
</dbReference>
<dbReference type="InterPro" id="IPR036890">
    <property type="entry name" value="HATPase_C_sf"/>
</dbReference>
<dbReference type="InterPro" id="IPR002099">
    <property type="entry name" value="MutL/Mlh/PMS"/>
</dbReference>
<dbReference type="InterPro" id="IPR038973">
    <property type="entry name" value="MutL/Mlh/Pms-like"/>
</dbReference>
<dbReference type="InterPro" id="IPR014790">
    <property type="entry name" value="MutL_C"/>
</dbReference>
<dbReference type="InterPro" id="IPR042120">
    <property type="entry name" value="MutL_C_dimsub"/>
</dbReference>
<dbReference type="InterPro" id="IPR042121">
    <property type="entry name" value="MutL_C_regsub"/>
</dbReference>
<dbReference type="InterPro" id="IPR037198">
    <property type="entry name" value="MutL_C_sf"/>
</dbReference>
<dbReference type="InterPro" id="IPR020568">
    <property type="entry name" value="Ribosomal_Su5_D2-typ_SF"/>
</dbReference>
<dbReference type="InterPro" id="IPR014721">
    <property type="entry name" value="Ribsml_uS5_D2-typ_fold_subgr"/>
</dbReference>
<dbReference type="NCBIfam" id="TIGR00585">
    <property type="entry name" value="mutl"/>
    <property type="match status" value="1"/>
</dbReference>
<dbReference type="NCBIfam" id="NF000948">
    <property type="entry name" value="PRK00095.1-1"/>
    <property type="match status" value="1"/>
</dbReference>
<dbReference type="PANTHER" id="PTHR10073">
    <property type="entry name" value="DNA MISMATCH REPAIR PROTEIN MLH, PMS, MUTL"/>
    <property type="match status" value="1"/>
</dbReference>
<dbReference type="PANTHER" id="PTHR10073:SF12">
    <property type="entry name" value="DNA MISMATCH REPAIR PROTEIN MLH1"/>
    <property type="match status" value="1"/>
</dbReference>
<dbReference type="Pfam" id="PF01119">
    <property type="entry name" value="DNA_mis_repair"/>
    <property type="match status" value="1"/>
</dbReference>
<dbReference type="Pfam" id="PF13589">
    <property type="entry name" value="HATPase_c_3"/>
    <property type="match status" value="1"/>
</dbReference>
<dbReference type="Pfam" id="PF08676">
    <property type="entry name" value="MutL_C"/>
    <property type="match status" value="1"/>
</dbReference>
<dbReference type="SMART" id="SM01340">
    <property type="entry name" value="DNA_mis_repair"/>
    <property type="match status" value="1"/>
</dbReference>
<dbReference type="SMART" id="SM00853">
    <property type="entry name" value="MutL_C"/>
    <property type="match status" value="1"/>
</dbReference>
<dbReference type="SUPFAM" id="SSF55874">
    <property type="entry name" value="ATPase domain of HSP90 chaperone/DNA topoisomerase II/histidine kinase"/>
    <property type="match status" value="1"/>
</dbReference>
<dbReference type="SUPFAM" id="SSF118116">
    <property type="entry name" value="DNA mismatch repair protein MutL"/>
    <property type="match status" value="1"/>
</dbReference>
<dbReference type="SUPFAM" id="SSF54211">
    <property type="entry name" value="Ribosomal protein S5 domain 2-like"/>
    <property type="match status" value="1"/>
</dbReference>
<dbReference type="PROSITE" id="PS00058">
    <property type="entry name" value="DNA_MISMATCH_REPAIR_1"/>
    <property type="match status" value="1"/>
</dbReference>